<protein>
    <recommendedName>
        <fullName>3-keto-steroid reductase</fullName>
        <ecNumber>1.1.1.270</ecNumber>
    </recommendedName>
</protein>
<proteinExistence type="inferred from homology"/>
<organism>
    <name type="scientific">Eremothecium gossypii (strain ATCC 10895 / CBS 109.51 / FGSC 9923 / NRRL Y-1056)</name>
    <name type="common">Yeast</name>
    <name type="synonym">Ashbya gossypii</name>
    <dbReference type="NCBI Taxonomy" id="284811"/>
    <lineage>
        <taxon>Eukaryota</taxon>
        <taxon>Fungi</taxon>
        <taxon>Dikarya</taxon>
        <taxon>Ascomycota</taxon>
        <taxon>Saccharomycotina</taxon>
        <taxon>Saccharomycetes</taxon>
        <taxon>Saccharomycetales</taxon>
        <taxon>Saccharomycetaceae</taxon>
        <taxon>Eremothecium</taxon>
    </lineage>
</organism>
<comment type="function">
    <text evidence="1">Responsible for the reduction of the keto group on the C-3 of sterols.</text>
</comment>
<comment type="catalytic activity">
    <reaction>
        <text>a 3beta-hydroxysteroid + NADP(+) = a 3-oxosteroid + NADPH + H(+)</text>
        <dbReference type="Rhea" id="RHEA:34787"/>
        <dbReference type="ChEBI" id="CHEBI:15378"/>
        <dbReference type="ChEBI" id="CHEBI:36836"/>
        <dbReference type="ChEBI" id="CHEBI:47788"/>
        <dbReference type="ChEBI" id="CHEBI:57783"/>
        <dbReference type="ChEBI" id="CHEBI:58349"/>
        <dbReference type="EC" id="1.1.1.270"/>
    </reaction>
</comment>
<comment type="pathway">
    <text>Steroid biosynthesis; zymosterol biosynthesis; zymosterol from lanosterol: step 5/6.</text>
</comment>
<comment type="similarity">
    <text evidence="4">Belongs to the short-chain dehydrogenases/reductases (SDR) family. ERG27 subfamily.</text>
</comment>
<dbReference type="EC" id="1.1.1.270"/>
<dbReference type="EMBL" id="AE016820">
    <property type="protein sequence ID" value="AAS54557.1"/>
    <property type="molecule type" value="Genomic_DNA"/>
</dbReference>
<dbReference type="RefSeq" id="NP_986733.1">
    <property type="nucleotide sequence ID" value="NM_211795.1"/>
</dbReference>
<dbReference type="SMR" id="Q74ZZ0"/>
<dbReference type="FunCoup" id="Q74ZZ0">
    <property type="interactions" value="158"/>
</dbReference>
<dbReference type="STRING" id="284811.Q74ZZ0"/>
<dbReference type="EnsemblFungi" id="AAS54557">
    <property type="protein sequence ID" value="AAS54557"/>
    <property type="gene ID" value="AGOS_AGR068W"/>
</dbReference>
<dbReference type="GeneID" id="4623034"/>
<dbReference type="KEGG" id="ago:AGOS_AGR068W"/>
<dbReference type="eggNOG" id="KOG1478">
    <property type="taxonomic scope" value="Eukaryota"/>
</dbReference>
<dbReference type="HOGENOM" id="CLU_029944_1_0_1"/>
<dbReference type="InParanoid" id="Q74ZZ0"/>
<dbReference type="OMA" id="WHNIDGY"/>
<dbReference type="OrthoDB" id="9989144at2759"/>
<dbReference type="UniPathway" id="UPA00770">
    <property type="reaction ID" value="UER00758"/>
</dbReference>
<dbReference type="Proteomes" id="UP000000591">
    <property type="component" value="Chromosome VII"/>
</dbReference>
<dbReference type="GO" id="GO:0005789">
    <property type="term" value="C:endoplasmic reticulum membrane"/>
    <property type="evidence" value="ECO:0000318"/>
    <property type="project" value="GO_Central"/>
</dbReference>
<dbReference type="GO" id="GO:0005811">
    <property type="term" value="C:lipid droplet"/>
    <property type="evidence" value="ECO:0000318"/>
    <property type="project" value="GO_Central"/>
</dbReference>
<dbReference type="GO" id="GO:0000253">
    <property type="term" value="F:3-beta-hydroxysteroid 3-dehydrogenase (NADP+) activity"/>
    <property type="evidence" value="ECO:0000318"/>
    <property type="project" value="GO_Central"/>
</dbReference>
<dbReference type="GO" id="GO:0006696">
    <property type="term" value="P:ergosterol biosynthetic process"/>
    <property type="evidence" value="ECO:0000318"/>
    <property type="project" value="GO_Central"/>
</dbReference>
<dbReference type="FunFam" id="3.40.50.720:FF:000525">
    <property type="entry name" value="3-keto-steroid reductase"/>
    <property type="match status" value="1"/>
</dbReference>
<dbReference type="Gene3D" id="3.40.50.720">
    <property type="entry name" value="NAD(P)-binding Rossmann-like Domain"/>
    <property type="match status" value="1"/>
</dbReference>
<dbReference type="InterPro" id="IPR051593">
    <property type="entry name" value="Ergosterol_Biosynth_ERG27"/>
</dbReference>
<dbReference type="InterPro" id="IPR036291">
    <property type="entry name" value="NAD(P)-bd_dom_sf"/>
</dbReference>
<dbReference type="PANTHER" id="PTHR43647:SF1">
    <property type="entry name" value="3-KETO-STEROID REDUCTASE ERG27"/>
    <property type="match status" value="1"/>
</dbReference>
<dbReference type="PANTHER" id="PTHR43647">
    <property type="entry name" value="DEHYDROGENASE"/>
    <property type="match status" value="1"/>
</dbReference>
<dbReference type="SUPFAM" id="SSF51735">
    <property type="entry name" value="NAD(P)-binding Rossmann-fold domains"/>
    <property type="match status" value="1"/>
</dbReference>
<keyword id="KW-0444">Lipid biosynthesis</keyword>
<keyword id="KW-0443">Lipid metabolism</keyword>
<keyword id="KW-0521">NADP</keyword>
<keyword id="KW-0560">Oxidoreductase</keyword>
<keyword id="KW-1185">Reference proteome</keyword>
<keyword id="KW-0752">Steroid biosynthesis</keyword>
<gene>
    <name type="primary">ERG27</name>
    <name type="ordered locus">AGR068W</name>
</gene>
<sequence length="348" mass="39684">MLICHQCLSSRLTYISNLGLNIAYRLIEQFTDDSKLVIVVTSRTLPRVREVVDLIKTYAEKCGKSGAVDFDYLLVDFTDMVSVLGAAYELEKRYDAIHYFYANAAQGVYSGIDWLGATKAVLRDPLDAVTNPTYKIQRVGVKSRDGLGLVFQANVFGPYYLIRRIIPLLAKGKAKVVWLSSLMSDVKYLSLEDVELLRTDSSYEGSKRLVDLLHLATYKELKSLGIHQYVTHPGIFTSHSFYQYLNFFTYYGMLFLFYLARWLGSPWHNIQGYKGANAPIYVATLANPTFEHQALKYGSATYRDGMEYIAKHEIDPTGMHDAYKYIRDLAEEWDIKLKDQITIGRSLS</sequence>
<accession>Q74ZZ0</accession>
<reference key="1">
    <citation type="journal article" date="2004" name="Science">
        <title>The Ashbya gossypii genome as a tool for mapping the ancient Saccharomyces cerevisiae genome.</title>
        <authorList>
            <person name="Dietrich F.S."/>
            <person name="Voegeli S."/>
            <person name="Brachat S."/>
            <person name="Lerch A."/>
            <person name="Gates K."/>
            <person name="Steiner S."/>
            <person name="Mohr C."/>
            <person name="Poehlmann R."/>
            <person name="Luedi P."/>
            <person name="Choi S."/>
            <person name="Wing R.A."/>
            <person name="Flavier A."/>
            <person name="Gaffney T.D."/>
            <person name="Philippsen P."/>
        </authorList>
    </citation>
    <scope>NUCLEOTIDE SEQUENCE [LARGE SCALE GENOMIC DNA]</scope>
    <source>
        <strain>ATCC 10895 / CBS 109.51 / FGSC 9923 / NRRL Y-1056</strain>
    </source>
</reference>
<reference key="2">
    <citation type="journal article" date="2013" name="G3 (Bethesda)">
        <title>Genomes of Ashbya fungi isolated from insects reveal four mating-type loci, numerous translocations, lack of transposons, and distinct gene duplications.</title>
        <authorList>
            <person name="Dietrich F.S."/>
            <person name="Voegeli S."/>
            <person name="Kuo S."/>
            <person name="Philippsen P."/>
        </authorList>
    </citation>
    <scope>GENOME REANNOTATION</scope>
    <source>
        <strain>ATCC 10895 / CBS 109.51 / FGSC 9923 / NRRL Y-1056</strain>
    </source>
</reference>
<evidence type="ECO:0000250" key="1"/>
<evidence type="ECO:0000250" key="2">
    <source>
        <dbReference type="UniProtKB" id="L0E2Z4"/>
    </source>
</evidence>
<evidence type="ECO:0000250" key="3">
    <source>
        <dbReference type="UniProtKB" id="O93868"/>
    </source>
</evidence>
<evidence type="ECO:0000305" key="4"/>
<feature type="chain" id="PRO_0000054589" description="3-keto-steroid reductase">
    <location>
        <begin position="1"/>
        <end position="348"/>
    </location>
</feature>
<feature type="active site" description="Proton donor" evidence="3">
    <location>
        <position position="180"/>
    </location>
</feature>
<feature type="active site" description="Proton donor" evidence="3">
    <location>
        <position position="203"/>
    </location>
</feature>
<feature type="active site" description="Lowers pKa of active site Tyr" evidence="3">
    <location>
        <position position="207"/>
    </location>
</feature>
<feature type="binding site" evidence="2">
    <location>
        <position position="18"/>
    </location>
    <ligand>
        <name>NADP(+)</name>
        <dbReference type="ChEBI" id="CHEBI:58349"/>
    </ligand>
</feature>
<feature type="binding site" evidence="2">
    <location>
        <position position="37"/>
    </location>
    <ligand>
        <name>NADP(+)</name>
        <dbReference type="ChEBI" id="CHEBI:58349"/>
    </ligand>
</feature>
<feature type="binding site" evidence="2">
    <location>
        <position position="41"/>
    </location>
    <ligand>
        <name>NADP(+)</name>
        <dbReference type="ChEBI" id="CHEBI:58349"/>
    </ligand>
</feature>
<feature type="binding site" evidence="2">
    <location>
        <position position="47"/>
    </location>
    <ligand>
        <name>NADP(+)</name>
        <dbReference type="ChEBI" id="CHEBI:58349"/>
    </ligand>
</feature>
<feature type="binding site" evidence="2">
    <location>
        <position position="163"/>
    </location>
    <ligand>
        <name>NADP(+)</name>
        <dbReference type="ChEBI" id="CHEBI:58349"/>
    </ligand>
</feature>
<feature type="binding site" evidence="3">
    <location>
        <position position="203"/>
    </location>
    <ligand>
        <name>NADP(+)</name>
        <dbReference type="ChEBI" id="CHEBI:58349"/>
    </ligand>
</feature>
<feature type="binding site" evidence="3">
    <location>
        <position position="207"/>
    </location>
    <ligand>
        <name>NADP(+)</name>
        <dbReference type="ChEBI" id="CHEBI:58349"/>
    </ligand>
</feature>
<feature type="binding site" evidence="2">
    <location>
        <position position="238"/>
    </location>
    <ligand>
        <name>NADP(+)</name>
        <dbReference type="ChEBI" id="CHEBI:58349"/>
    </ligand>
</feature>
<name>ERG27_EREGS</name>